<proteinExistence type="evidence at transcript level"/>
<accession>P09066</accession>
<keyword id="KW-0217">Developmental protein</keyword>
<keyword id="KW-0238">DNA-binding</keyword>
<keyword id="KW-0371">Homeobox</keyword>
<keyword id="KW-0539">Nucleus</keyword>
<keyword id="KW-1185">Reference proteome</keyword>
<evidence type="ECO:0000255" key="1">
    <source>
        <dbReference type="PROSITE-ProRule" id="PRU00108"/>
    </source>
</evidence>
<evidence type="ECO:0000256" key="2">
    <source>
        <dbReference type="SAM" id="MobiDB-lite"/>
    </source>
</evidence>
<evidence type="ECO:0000305" key="3"/>
<organism>
    <name type="scientific">Mus musculus</name>
    <name type="common">Mouse</name>
    <dbReference type="NCBI Taxonomy" id="10090"/>
    <lineage>
        <taxon>Eukaryota</taxon>
        <taxon>Metazoa</taxon>
        <taxon>Chordata</taxon>
        <taxon>Craniata</taxon>
        <taxon>Vertebrata</taxon>
        <taxon>Euteleostomi</taxon>
        <taxon>Mammalia</taxon>
        <taxon>Eutheria</taxon>
        <taxon>Euarchontoglires</taxon>
        <taxon>Glires</taxon>
        <taxon>Rodentia</taxon>
        <taxon>Myomorpha</taxon>
        <taxon>Muroidea</taxon>
        <taxon>Muridae</taxon>
        <taxon>Murinae</taxon>
        <taxon>Mus</taxon>
        <taxon>Mus</taxon>
    </lineage>
</organism>
<feature type="chain" id="PRO_0000196068" description="Homeobox protein engrailed-2">
    <location>
        <begin position="1"/>
        <end position="324"/>
    </location>
</feature>
<feature type="DNA-binding region" description="Homeobox" evidence="1">
    <location>
        <begin position="235"/>
        <end position="294"/>
    </location>
</feature>
<feature type="region of interest" description="Disordered" evidence="2">
    <location>
        <begin position="1"/>
        <end position="59"/>
    </location>
</feature>
<feature type="region of interest" description="Disordered" evidence="2">
    <location>
        <begin position="89"/>
        <end position="174"/>
    </location>
</feature>
<feature type="region of interest" description="Disordered" evidence="2">
    <location>
        <begin position="215"/>
        <end position="240"/>
    </location>
</feature>
<feature type="compositionally biased region" description="Gly residues" evidence="2">
    <location>
        <begin position="89"/>
        <end position="110"/>
    </location>
</feature>
<reference key="1">
    <citation type="journal article" date="1992" name="Dev. Genet.">
        <title>Cloning and sequence comparison of the mouse, human, and chicken engrailed genes reveal potential functional domains and regulatory regions.</title>
        <authorList>
            <person name="Logan C."/>
            <person name="Hanks M.C."/>
            <person name="Noble-Topham S."/>
            <person name="Nallainathan D."/>
            <person name="Provart N.J."/>
            <person name="Joyner A.L."/>
        </authorList>
    </citation>
    <scope>NUCLEOTIDE SEQUENCE</scope>
</reference>
<reference key="2">
    <citation type="journal article" date="1987" name="Genes Dev.">
        <title>En-1 and En-2, two mouse genes with sequence homology to the Drosophila engrailed gene: expression during embryogenesis.</title>
        <authorList>
            <person name="Joyner A.L."/>
            <person name="Martin G.R."/>
        </authorList>
    </citation>
    <scope>NUCLEOTIDE SEQUENCE OF 201-324</scope>
</reference>
<name>HME2_MOUSE</name>
<dbReference type="EMBL" id="L12704">
    <property type="status" value="NOT_ANNOTATED_CDS"/>
    <property type="molecule type" value="Genomic_DNA"/>
</dbReference>
<dbReference type="EMBL" id="L12705">
    <property type="protein sequence ID" value="AAA53527.1"/>
    <property type="molecule type" value="mRNA"/>
</dbReference>
<dbReference type="EMBL" id="Y00203">
    <property type="protein sequence ID" value="CAA68362.1"/>
    <property type="molecule type" value="Genomic_DNA"/>
</dbReference>
<dbReference type="CCDS" id="CCDS19143.1"/>
<dbReference type="PIR" id="D48423">
    <property type="entry name" value="D48423"/>
</dbReference>
<dbReference type="RefSeq" id="NP_034264.1">
    <property type="nucleotide sequence ID" value="NM_010134.4"/>
</dbReference>
<dbReference type="BMRB" id="P09066"/>
<dbReference type="SMR" id="P09066"/>
<dbReference type="BioGRID" id="199445">
    <property type="interactions" value="6"/>
</dbReference>
<dbReference type="FunCoup" id="P09066">
    <property type="interactions" value="1699"/>
</dbReference>
<dbReference type="STRING" id="10090.ENSMUSP00000036761"/>
<dbReference type="GlyGen" id="P09066">
    <property type="glycosylation" value="1 site, 1 O-linked glycan (1 site)"/>
</dbReference>
<dbReference type="iPTMnet" id="P09066"/>
<dbReference type="PhosphoSitePlus" id="P09066"/>
<dbReference type="PaxDb" id="10090-ENSMUSP00000036761"/>
<dbReference type="PeptideAtlas" id="P09066"/>
<dbReference type="ProteomicsDB" id="269604"/>
<dbReference type="Antibodypedia" id="18860">
    <property type="antibodies" value="267 antibodies from 29 providers"/>
</dbReference>
<dbReference type="DNASU" id="13799"/>
<dbReference type="Ensembl" id="ENSMUST00000036177.9">
    <property type="protein sequence ID" value="ENSMUSP00000036761.8"/>
    <property type="gene ID" value="ENSMUSG00000039095.9"/>
</dbReference>
<dbReference type="GeneID" id="13799"/>
<dbReference type="KEGG" id="mmu:13799"/>
<dbReference type="UCSC" id="uc008wtv.1">
    <property type="organism name" value="mouse"/>
</dbReference>
<dbReference type="AGR" id="MGI:95390"/>
<dbReference type="CTD" id="2020"/>
<dbReference type="MGI" id="MGI:95390">
    <property type="gene designation" value="En2"/>
</dbReference>
<dbReference type="VEuPathDB" id="HostDB:ENSMUSG00000039095"/>
<dbReference type="eggNOG" id="KOG0493">
    <property type="taxonomic scope" value="Eukaryota"/>
</dbReference>
<dbReference type="GeneTree" id="ENSGT00940000159935"/>
<dbReference type="HOGENOM" id="CLU_051739_2_0_1"/>
<dbReference type="InParanoid" id="P09066"/>
<dbReference type="OMA" id="GGQPMLW"/>
<dbReference type="OrthoDB" id="6159439at2759"/>
<dbReference type="PhylomeDB" id="P09066"/>
<dbReference type="TreeFam" id="TF106461"/>
<dbReference type="BioGRID-ORCS" id="13799">
    <property type="hits" value="1 hit in 80 CRISPR screens"/>
</dbReference>
<dbReference type="ChiTaRS" id="En2">
    <property type="organism name" value="mouse"/>
</dbReference>
<dbReference type="PRO" id="PR:P09066"/>
<dbReference type="Proteomes" id="UP000000589">
    <property type="component" value="Chromosome 5"/>
</dbReference>
<dbReference type="RNAct" id="P09066">
    <property type="molecule type" value="protein"/>
</dbReference>
<dbReference type="Bgee" id="ENSMUSG00000039095">
    <property type="expression patterns" value="Expressed in presumptive midbrain and 68 other cell types or tissues"/>
</dbReference>
<dbReference type="ExpressionAtlas" id="P09066">
    <property type="expression patterns" value="baseline and differential"/>
</dbReference>
<dbReference type="GO" id="GO:0001650">
    <property type="term" value="C:fibrillar center"/>
    <property type="evidence" value="ECO:0007669"/>
    <property type="project" value="Ensembl"/>
</dbReference>
<dbReference type="GO" id="GO:0005654">
    <property type="term" value="C:nucleoplasm"/>
    <property type="evidence" value="ECO:0007669"/>
    <property type="project" value="Ensembl"/>
</dbReference>
<dbReference type="GO" id="GO:0000981">
    <property type="term" value="F:DNA-binding transcription factor activity, RNA polymerase II-specific"/>
    <property type="evidence" value="ECO:0007669"/>
    <property type="project" value="InterPro"/>
</dbReference>
<dbReference type="GO" id="GO:1990837">
    <property type="term" value="F:sequence-specific double-stranded DNA binding"/>
    <property type="evidence" value="ECO:0007669"/>
    <property type="project" value="Ensembl"/>
</dbReference>
<dbReference type="GO" id="GO:0021953">
    <property type="term" value="P:central nervous system neuron differentiation"/>
    <property type="evidence" value="ECO:0000316"/>
    <property type="project" value="MGI"/>
</dbReference>
<dbReference type="GO" id="GO:0071542">
    <property type="term" value="P:dopaminergic neuron differentiation"/>
    <property type="evidence" value="ECO:0000316"/>
    <property type="project" value="MGI"/>
</dbReference>
<dbReference type="GO" id="GO:1990403">
    <property type="term" value="P:embryonic brain development"/>
    <property type="evidence" value="ECO:0000316"/>
    <property type="project" value="ParkinsonsUK-UCL"/>
</dbReference>
<dbReference type="GO" id="GO:0030902">
    <property type="term" value="P:hindbrain development"/>
    <property type="evidence" value="ECO:0000316"/>
    <property type="project" value="MGI"/>
</dbReference>
<dbReference type="GO" id="GO:0030901">
    <property type="term" value="P:midbrain development"/>
    <property type="evidence" value="ECO:0000316"/>
    <property type="project" value="MGI"/>
</dbReference>
<dbReference type="GO" id="GO:0043524">
    <property type="term" value="P:negative regulation of neuron apoptotic process"/>
    <property type="evidence" value="ECO:0000316"/>
    <property type="project" value="ParkinsonsUK-UCL"/>
</dbReference>
<dbReference type="GO" id="GO:0048666">
    <property type="term" value="P:neuron development"/>
    <property type="evidence" value="ECO:0000316"/>
    <property type="project" value="MGI"/>
</dbReference>
<dbReference type="GO" id="GO:0030182">
    <property type="term" value="P:neuron differentiation"/>
    <property type="evidence" value="ECO:0000316"/>
    <property type="project" value="MGI"/>
</dbReference>
<dbReference type="GO" id="GO:0045944">
    <property type="term" value="P:positive regulation of transcription by RNA polymerase II"/>
    <property type="evidence" value="ECO:0000314"/>
    <property type="project" value="MGI"/>
</dbReference>
<dbReference type="CDD" id="cd00086">
    <property type="entry name" value="homeodomain"/>
    <property type="match status" value="1"/>
</dbReference>
<dbReference type="FunFam" id="1.10.10.60:FF:000167">
    <property type="entry name" value="Homeobox protein engrailed-like"/>
    <property type="match status" value="1"/>
</dbReference>
<dbReference type="Gene3D" id="1.10.10.60">
    <property type="entry name" value="Homeodomain-like"/>
    <property type="match status" value="1"/>
</dbReference>
<dbReference type="InterPro" id="IPR050720">
    <property type="entry name" value="Engrailed_Homeobox_TFs"/>
</dbReference>
<dbReference type="InterPro" id="IPR001356">
    <property type="entry name" value="HD"/>
</dbReference>
<dbReference type="InterPro" id="IPR000747">
    <property type="entry name" value="HD_engrailed"/>
</dbReference>
<dbReference type="InterPro" id="IPR020479">
    <property type="entry name" value="HD_metazoa"/>
</dbReference>
<dbReference type="InterPro" id="IPR019549">
    <property type="entry name" value="Homeobox-engrailed_C-terminal"/>
</dbReference>
<dbReference type="InterPro" id="IPR019737">
    <property type="entry name" value="Homeobox-engrailed_CS"/>
</dbReference>
<dbReference type="InterPro" id="IPR017970">
    <property type="entry name" value="Homeobox_CS"/>
</dbReference>
<dbReference type="InterPro" id="IPR009057">
    <property type="entry name" value="Homeodomain-like_sf"/>
</dbReference>
<dbReference type="PANTHER" id="PTHR24341">
    <property type="entry name" value="HOMEOBOX PROTEIN ENGRAILED"/>
    <property type="match status" value="1"/>
</dbReference>
<dbReference type="PANTHER" id="PTHR24341:SF5">
    <property type="entry name" value="HOMEOBOX PROTEIN ENGRAILED-2"/>
    <property type="match status" value="1"/>
</dbReference>
<dbReference type="Pfam" id="PF10525">
    <property type="entry name" value="Engrail_1_C_sig"/>
    <property type="match status" value="1"/>
</dbReference>
<dbReference type="Pfam" id="PF00046">
    <property type="entry name" value="Homeodomain"/>
    <property type="match status" value="1"/>
</dbReference>
<dbReference type="PRINTS" id="PR00026">
    <property type="entry name" value="ENGRAILED"/>
</dbReference>
<dbReference type="PRINTS" id="PR00024">
    <property type="entry name" value="HOMEOBOX"/>
</dbReference>
<dbReference type="SMART" id="SM00389">
    <property type="entry name" value="HOX"/>
    <property type="match status" value="1"/>
</dbReference>
<dbReference type="SUPFAM" id="SSF46689">
    <property type="entry name" value="Homeodomain-like"/>
    <property type="match status" value="1"/>
</dbReference>
<dbReference type="PROSITE" id="PS00033">
    <property type="entry name" value="ENGRAILED"/>
    <property type="match status" value="1"/>
</dbReference>
<dbReference type="PROSITE" id="PS00027">
    <property type="entry name" value="HOMEOBOX_1"/>
    <property type="match status" value="1"/>
</dbReference>
<dbReference type="PROSITE" id="PS50071">
    <property type="entry name" value="HOMEOBOX_2"/>
    <property type="match status" value="1"/>
</dbReference>
<gene>
    <name type="primary">En2</name>
    <name type="synonym">En-2</name>
</gene>
<protein>
    <recommendedName>
        <fullName>Homeobox protein engrailed-2</fullName>
        <shortName>Homeobox protein en-2</shortName>
        <shortName>Mo-En-2</shortName>
    </recommendedName>
</protein>
<comment type="subcellular location">
    <subcellularLocation>
        <location>Nucleus</location>
    </subcellularLocation>
</comment>
<comment type="tissue specificity">
    <text>Cerebellar granule cells.</text>
</comment>
<comment type="developmental stage">
    <text>In the adult brain it is found in the cerebellar granule cell layer while the expression during the gestation period is region specific, at the junction of the midbrain and hindbrain.</text>
</comment>
<comment type="similarity">
    <text evidence="3">Belongs to the engrailed homeobox family.</text>
</comment>
<sequence length="324" mass="33817">MEEKDSKPSETAAEAQRQPEPSSGGGSGGGSSPSDSDTGRRRALMLPEVLQAPGNHQHPHRITNFFIDNILRPEFGRRKDAGTCCAGAGGARGGEGGAGTTEGGGGGAGGAEQLLGARESRPNPACAPSAGGTLSAAAGDPAVDGEGGSKTLSLHGGAKKPGDPGGSLDGVLKARGLGGGDLSVSSDSDSSQASATLGAQPMLWPAWVYCTRYSDRPSSGPRSRKPKKKNPNKEDKRPRTAFTAEQLQRLKAEFQTNRYLTEQRRQSLAQELSLNESQIKIWFQNKRAKIKKATGNKNTLAVHLMAQGLYNHSTTAKEGKSDSE</sequence>